<accession>A0T0N6</accession>
<dbReference type="EC" id="4.1.1.39" evidence="1"/>
<dbReference type="EMBL" id="EF067921">
    <property type="protein sequence ID" value="ABK20721.1"/>
    <property type="molecule type" value="Genomic_DNA"/>
</dbReference>
<dbReference type="RefSeq" id="YP_874498.1">
    <property type="nucleotide sequence ID" value="NC_008589.1"/>
</dbReference>
<dbReference type="SMR" id="A0T0N6"/>
<dbReference type="STRING" id="35128.A0T0N6"/>
<dbReference type="PaxDb" id="35128-Thapsdraft2088"/>
<dbReference type="GeneID" id="4524793"/>
<dbReference type="eggNOG" id="ENOG502QTI9">
    <property type="taxonomic scope" value="Eukaryota"/>
</dbReference>
<dbReference type="InParanoid" id="A0T0N6"/>
<dbReference type="OMA" id="IHGHPDG"/>
<dbReference type="GO" id="GO:0009507">
    <property type="term" value="C:chloroplast"/>
    <property type="evidence" value="ECO:0007669"/>
    <property type="project" value="UniProtKB-SubCell"/>
</dbReference>
<dbReference type="GO" id="GO:0000287">
    <property type="term" value="F:magnesium ion binding"/>
    <property type="evidence" value="ECO:0007669"/>
    <property type="project" value="UniProtKB-UniRule"/>
</dbReference>
<dbReference type="GO" id="GO:0004497">
    <property type="term" value="F:monooxygenase activity"/>
    <property type="evidence" value="ECO:0007669"/>
    <property type="project" value="UniProtKB-KW"/>
</dbReference>
<dbReference type="GO" id="GO:0016984">
    <property type="term" value="F:ribulose-bisphosphate carboxylase activity"/>
    <property type="evidence" value="ECO:0007669"/>
    <property type="project" value="UniProtKB-UniRule"/>
</dbReference>
<dbReference type="GO" id="GO:0019253">
    <property type="term" value="P:reductive pentose-phosphate cycle"/>
    <property type="evidence" value="ECO:0007669"/>
    <property type="project" value="UniProtKB-UniRule"/>
</dbReference>
<dbReference type="CDD" id="cd08212">
    <property type="entry name" value="RuBisCO_large_I"/>
    <property type="match status" value="1"/>
</dbReference>
<dbReference type="Gene3D" id="3.20.20.110">
    <property type="entry name" value="Ribulose bisphosphate carboxylase, large subunit, C-terminal domain"/>
    <property type="match status" value="1"/>
</dbReference>
<dbReference type="Gene3D" id="3.30.70.150">
    <property type="entry name" value="RuBisCO large subunit, N-terminal domain"/>
    <property type="match status" value="1"/>
</dbReference>
<dbReference type="HAMAP" id="MF_01338">
    <property type="entry name" value="RuBisCO_L_type1"/>
    <property type="match status" value="1"/>
</dbReference>
<dbReference type="InterPro" id="IPR033966">
    <property type="entry name" value="RuBisCO"/>
</dbReference>
<dbReference type="InterPro" id="IPR020878">
    <property type="entry name" value="RuBisCo_large_chain_AS"/>
</dbReference>
<dbReference type="InterPro" id="IPR000685">
    <property type="entry name" value="RuBisCO_lsu_C"/>
</dbReference>
<dbReference type="InterPro" id="IPR036376">
    <property type="entry name" value="RuBisCO_lsu_C_sf"/>
</dbReference>
<dbReference type="InterPro" id="IPR017443">
    <property type="entry name" value="RuBisCO_lsu_fd_N"/>
</dbReference>
<dbReference type="InterPro" id="IPR036422">
    <property type="entry name" value="RuBisCO_lsu_N_sf"/>
</dbReference>
<dbReference type="InterPro" id="IPR020888">
    <property type="entry name" value="RuBisCO_lsuI"/>
</dbReference>
<dbReference type="NCBIfam" id="NF003252">
    <property type="entry name" value="PRK04208.1"/>
    <property type="match status" value="1"/>
</dbReference>
<dbReference type="PANTHER" id="PTHR42704">
    <property type="entry name" value="RIBULOSE BISPHOSPHATE CARBOXYLASE"/>
    <property type="match status" value="1"/>
</dbReference>
<dbReference type="PANTHER" id="PTHR42704:SF17">
    <property type="entry name" value="RIBULOSE BISPHOSPHATE CARBOXYLASE LARGE CHAIN"/>
    <property type="match status" value="1"/>
</dbReference>
<dbReference type="Pfam" id="PF00016">
    <property type="entry name" value="RuBisCO_large"/>
    <property type="match status" value="1"/>
</dbReference>
<dbReference type="Pfam" id="PF02788">
    <property type="entry name" value="RuBisCO_large_N"/>
    <property type="match status" value="1"/>
</dbReference>
<dbReference type="SFLD" id="SFLDG01052">
    <property type="entry name" value="RuBisCO"/>
    <property type="match status" value="1"/>
</dbReference>
<dbReference type="SFLD" id="SFLDS00014">
    <property type="entry name" value="RuBisCO"/>
    <property type="match status" value="1"/>
</dbReference>
<dbReference type="SFLD" id="SFLDG00301">
    <property type="entry name" value="RuBisCO-like_proteins"/>
    <property type="match status" value="1"/>
</dbReference>
<dbReference type="SUPFAM" id="SSF51649">
    <property type="entry name" value="RuBisCo, C-terminal domain"/>
    <property type="match status" value="1"/>
</dbReference>
<dbReference type="SUPFAM" id="SSF54966">
    <property type="entry name" value="RuBisCO, large subunit, small (N-terminal) domain"/>
    <property type="match status" value="1"/>
</dbReference>
<dbReference type="PROSITE" id="PS00157">
    <property type="entry name" value="RUBISCO_LARGE"/>
    <property type="match status" value="1"/>
</dbReference>
<organism>
    <name type="scientific">Thalassiosira pseudonana</name>
    <name type="common">Marine diatom</name>
    <name type="synonym">Cyclotella nana</name>
    <dbReference type="NCBI Taxonomy" id="35128"/>
    <lineage>
        <taxon>Eukaryota</taxon>
        <taxon>Sar</taxon>
        <taxon>Stramenopiles</taxon>
        <taxon>Ochrophyta</taxon>
        <taxon>Bacillariophyta</taxon>
        <taxon>Coscinodiscophyceae</taxon>
        <taxon>Thalassiosirophycidae</taxon>
        <taxon>Thalassiosirales</taxon>
        <taxon>Thalassiosiraceae</taxon>
        <taxon>Thalassiosira</taxon>
    </lineage>
</organism>
<protein>
    <recommendedName>
        <fullName evidence="1">Ribulose bisphosphate carboxylase large chain</fullName>
        <shortName evidence="1">RuBisCO large subunit</shortName>
        <ecNumber evidence="1">4.1.1.39</ecNumber>
    </recommendedName>
</protein>
<feature type="chain" id="PRO_0000275374" description="Ribulose bisphosphate carboxylase large chain">
    <location>
        <begin position="1"/>
        <end position="490"/>
    </location>
</feature>
<feature type="active site" description="Proton acceptor" evidence="1">
    <location>
        <position position="179"/>
    </location>
</feature>
<feature type="active site" description="Proton acceptor" evidence="1">
    <location>
        <position position="297"/>
    </location>
</feature>
<feature type="binding site" description="in homodimeric partner" evidence="1">
    <location>
        <position position="127"/>
    </location>
    <ligand>
        <name>substrate</name>
    </ligand>
</feature>
<feature type="binding site" evidence="1">
    <location>
        <position position="177"/>
    </location>
    <ligand>
        <name>substrate</name>
    </ligand>
</feature>
<feature type="binding site" evidence="1">
    <location>
        <position position="181"/>
    </location>
    <ligand>
        <name>substrate</name>
    </ligand>
</feature>
<feature type="binding site" description="via carbamate group" evidence="1">
    <location>
        <position position="205"/>
    </location>
    <ligand>
        <name>Mg(2+)</name>
        <dbReference type="ChEBI" id="CHEBI:18420"/>
    </ligand>
</feature>
<feature type="binding site" evidence="1">
    <location>
        <position position="207"/>
    </location>
    <ligand>
        <name>Mg(2+)</name>
        <dbReference type="ChEBI" id="CHEBI:18420"/>
    </ligand>
</feature>
<feature type="binding site" evidence="1">
    <location>
        <position position="208"/>
    </location>
    <ligand>
        <name>Mg(2+)</name>
        <dbReference type="ChEBI" id="CHEBI:18420"/>
    </ligand>
</feature>
<feature type="binding site" evidence="1">
    <location>
        <position position="298"/>
    </location>
    <ligand>
        <name>substrate</name>
    </ligand>
</feature>
<feature type="binding site" evidence="1">
    <location>
        <position position="330"/>
    </location>
    <ligand>
        <name>substrate</name>
    </ligand>
</feature>
<feature type="binding site" evidence="1">
    <location>
        <position position="382"/>
    </location>
    <ligand>
        <name>substrate</name>
    </ligand>
</feature>
<feature type="site" description="Transition state stabilizer" evidence="1">
    <location>
        <position position="337"/>
    </location>
</feature>
<feature type="modified residue" description="N6-carboxylysine" evidence="1">
    <location>
        <position position="205"/>
    </location>
</feature>
<gene>
    <name evidence="1" type="primary">rbcL</name>
</gene>
<comment type="function">
    <text evidence="1">RuBisCO catalyzes two reactions: the carboxylation of D-ribulose 1,5-bisphosphate, the primary event in carbon dioxide fixation, as well as the oxidative fragmentation of the pentose substrate in the photorespiration process. Both reactions occur simultaneously and in competition at the same active site.</text>
</comment>
<comment type="catalytic activity">
    <reaction evidence="1">
        <text>2 (2R)-3-phosphoglycerate + 2 H(+) = D-ribulose 1,5-bisphosphate + CO2 + H2O</text>
        <dbReference type="Rhea" id="RHEA:23124"/>
        <dbReference type="ChEBI" id="CHEBI:15377"/>
        <dbReference type="ChEBI" id="CHEBI:15378"/>
        <dbReference type="ChEBI" id="CHEBI:16526"/>
        <dbReference type="ChEBI" id="CHEBI:57870"/>
        <dbReference type="ChEBI" id="CHEBI:58272"/>
        <dbReference type="EC" id="4.1.1.39"/>
    </reaction>
</comment>
<comment type="catalytic activity">
    <reaction evidence="1">
        <text>D-ribulose 1,5-bisphosphate + O2 = 2-phosphoglycolate + (2R)-3-phosphoglycerate + 2 H(+)</text>
        <dbReference type="Rhea" id="RHEA:36631"/>
        <dbReference type="ChEBI" id="CHEBI:15378"/>
        <dbReference type="ChEBI" id="CHEBI:15379"/>
        <dbReference type="ChEBI" id="CHEBI:57870"/>
        <dbReference type="ChEBI" id="CHEBI:58033"/>
        <dbReference type="ChEBI" id="CHEBI:58272"/>
    </reaction>
</comment>
<comment type="cofactor">
    <cofactor evidence="1">
        <name>Mg(2+)</name>
        <dbReference type="ChEBI" id="CHEBI:18420"/>
    </cofactor>
    <text evidence="1">Binds 1 Mg(2+) ion per subunit.</text>
</comment>
<comment type="subunit">
    <text evidence="1">Heterohexadecamer of 8 large chains and 8 small chains.</text>
</comment>
<comment type="subcellular location">
    <subcellularLocation>
        <location>Plastid</location>
        <location>Chloroplast</location>
    </subcellularLocation>
</comment>
<comment type="miscellaneous">
    <text evidence="1">The basic functional RuBisCO is composed of a large chain homodimer in a 'head-to-tail' conformation. In form I RuBisCO this homodimer is arranged in a barrel-like tetramer with the small subunits forming a tetrameric 'cap' on each end of the 'barrel'.</text>
</comment>
<comment type="similarity">
    <text evidence="1">Belongs to the RuBisCO large chain family. Type I subfamily.</text>
</comment>
<name>RBL_THAPS</name>
<reference key="1">
    <citation type="journal article" date="2007" name="Mol. Genet. Genomics">
        <title>Chloroplast genomes of the diatoms Phaeodactylum tricornutum and Thalassiosira pseudonana: comparison with other plastid genomes of the red lineage.</title>
        <authorList>
            <person name="Oudot-Le Secq M.-P."/>
            <person name="Grimwood J."/>
            <person name="Shapiro H."/>
            <person name="Armbrust E.V."/>
            <person name="Bowler C."/>
            <person name="Green B.R."/>
        </authorList>
    </citation>
    <scope>NUCLEOTIDE SEQUENCE [LARGE SCALE GENOMIC DNA]</scope>
    <source>
        <strain>CCMP1335 / NEPCC58 / CCAP 1085/12</strain>
    </source>
</reference>
<proteinExistence type="inferred from homology"/>
<sequence>MSQSVSERTRIKSDRYESGVIPYAKMGYWDAAYTVKDTDVLALFRITPQPGVDPVEAAAAVAGESSTATWTVVWTDLLTACERYRAKAYRVDPVPSATDQYFAFIAYECDLFEEASLSNLTASIIGNVFGFKAISALRLEDMRIPHSYLKTFQGPATGIVVERERLNKYGTPLLGATVKPKLGLSGKNYGRVVYEGLKGGLDFLKDDENINSQPFMRWRERFLNCLEGINRASAATGEVKGSYLNITAATMEEVYKRAEYAKMIGSVIVMIDLVMGYTAIQSIAYWARENDMLLHLHRAGNSTYARQKNHGINFRVICKWMRMSGVDHIHAGTVVGKLEGDPLMIKGFYDILRLTELEVNLPFGIFFEMDWASLRRCMPVASGGIHCGQMHQLIHYLGDDVVLQFGGGTIGHPDGIQAGATANRVALEAMVLARNEGLDYFNQQVGPQILRDAAKTCGPLQTALDLWKDISFNYTSTDTADFAETATANR</sequence>
<keyword id="KW-0113">Calvin cycle</keyword>
<keyword id="KW-0120">Carbon dioxide fixation</keyword>
<keyword id="KW-0150">Chloroplast</keyword>
<keyword id="KW-0456">Lyase</keyword>
<keyword id="KW-0460">Magnesium</keyword>
<keyword id="KW-0479">Metal-binding</keyword>
<keyword id="KW-0503">Monooxygenase</keyword>
<keyword id="KW-0560">Oxidoreductase</keyword>
<keyword id="KW-0601">Photorespiration</keyword>
<keyword id="KW-0602">Photosynthesis</keyword>
<keyword id="KW-0934">Plastid</keyword>
<evidence type="ECO:0000255" key="1">
    <source>
        <dbReference type="HAMAP-Rule" id="MF_01338"/>
    </source>
</evidence>
<geneLocation type="chloroplast"/>